<protein>
    <recommendedName>
        <fullName evidence="1">Glycine cleavage system H protein</fullName>
    </recommendedName>
</protein>
<accession>C1DD72</accession>
<proteinExistence type="inferred from homology"/>
<gene>
    <name evidence="1" type="primary">gcvH</name>
    <name type="ordered locus">LHK_02723</name>
</gene>
<reference key="1">
    <citation type="journal article" date="2009" name="PLoS Genet.">
        <title>The complete genome and proteome of Laribacter hongkongensis reveal potential mechanisms for adaptations to different temperatures and habitats.</title>
        <authorList>
            <person name="Woo P.C.Y."/>
            <person name="Lau S.K.P."/>
            <person name="Tse H."/>
            <person name="Teng J.L.L."/>
            <person name="Curreem S.O."/>
            <person name="Tsang A.K.L."/>
            <person name="Fan R.Y.Y."/>
            <person name="Wong G.K.M."/>
            <person name="Huang Y."/>
            <person name="Loman N.J."/>
            <person name="Snyder L.A.S."/>
            <person name="Cai J.J."/>
            <person name="Huang J.-D."/>
            <person name="Mak W."/>
            <person name="Pallen M.J."/>
            <person name="Lok S."/>
            <person name="Yuen K.-Y."/>
        </authorList>
    </citation>
    <scope>NUCLEOTIDE SEQUENCE [LARGE SCALE GENOMIC DNA]</scope>
    <source>
        <strain>HLHK9</strain>
    </source>
</reference>
<organism>
    <name type="scientific">Laribacter hongkongensis (strain HLHK9)</name>
    <dbReference type="NCBI Taxonomy" id="557598"/>
    <lineage>
        <taxon>Bacteria</taxon>
        <taxon>Pseudomonadati</taxon>
        <taxon>Pseudomonadota</taxon>
        <taxon>Betaproteobacteria</taxon>
        <taxon>Neisseriales</taxon>
        <taxon>Aquaspirillaceae</taxon>
        <taxon>Laribacter</taxon>
    </lineage>
</organism>
<feature type="chain" id="PRO_1000132422" description="Glycine cleavage system H protein">
    <location>
        <begin position="1"/>
        <end position="127"/>
    </location>
</feature>
<feature type="domain" description="Lipoyl-binding" evidence="2">
    <location>
        <begin position="24"/>
        <end position="106"/>
    </location>
</feature>
<feature type="modified residue" description="N6-lipoyllysine" evidence="1">
    <location>
        <position position="65"/>
    </location>
</feature>
<keyword id="KW-0450">Lipoyl</keyword>
<keyword id="KW-1185">Reference proteome</keyword>
<name>GCSH_LARHH</name>
<dbReference type="EMBL" id="CP001154">
    <property type="protein sequence ID" value="ACO75704.1"/>
    <property type="molecule type" value="Genomic_DNA"/>
</dbReference>
<dbReference type="RefSeq" id="WP_012698167.1">
    <property type="nucleotide sequence ID" value="NC_012559.1"/>
</dbReference>
<dbReference type="SMR" id="C1DD72"/>
<dbReference type="STRING" id="557598.LHK_02723"/>
<dbReference type="GeneID" id="75110066"/>
<dbReference type="KEGG" id="lhk:LHK_02723"/>
<dbReference type="eggNOG" id="COG0509">
    <property type="taxonomic scope" value="Bacteria"/>
</dbReference>
<dbReference type="HOGENOM" id="CLU_097408_2_1_4"/>
<dbReference type="Proteomes" id="UP000002010">
    <property type="component" value="Chromosome"/>
</dbReference>
<dbReference type="GO" id="GO:0005829">
    <property type="term" value="C:cytosol"/>
    <property type="evidence" value="ECO:0007669"/>
    <property type="project" value="TreeGrafter"/>
</dbReference>
<dbReference type="GO" id="GO:0005960">
    <property type="term" value="C:glycine cleavage complex"/>
    <property type="evidence" value="ECO:0007669"/>
    <property type="project" value="InterPro"/>
</dbReference>
<dbReference type="GO" id="GO:0019464">
    <property type="term" value="P:glycine decarboxylation via glycine cleavage system"/>
    <property type="evidence" value="ECO:0007669"/>
    <property type="project" value="UniProtKB-UniRule"/>
</dbReference>
<dbReference type="CDD" id="cd06848">
    <property type="entry name" value="GCS_H"/>
    <property type="match status" value="1"/>
</dbReference>
<dbReference type="Gene3D" id="2.40.50.100">
    <property type="match status" value="1"/>
</dbReference>
<dbReference type="HAMAP" id="MF_00272">
    <property type="entry name" value="GcvH"/>
    <property type="match status" value="1"/>
</dbReference>
<dbReference type="InterPro" id="IPR003016">
    <property type="entry name" value="2-oxoA_DH_lipoyl-BS"/>
</dbReference>
<dbReference type="InterPro" id="IPR000089">
    <property type="entry name" value="Biotin_lipoyl"/>
</dbReference>
<dbReference type="InterPro" id="IPR002930">
    <property type="entry name" value="GCV_H"/>
</dbReference>
<dbReference type="InterPro" id="IPR033753">
    <property type="entry name" value="GCV_H/Fam206"/>
</dbReference>
<dbReference type="InterPro" id="IPR017453">
    <property type="entry name" value="GCV_H_sub"/>
</dbReference>
<dbReference type="InterPro" id="IPR011053">
    <property type="entry name" value="Single_hybrid_motif"/>
</dbReference>
<dbReference type="NCBIfam" id="TIGR00527">
    <property type="entry name" value="gcvH"/>
    <property type="match status" value="1"/>
</dbReference>
<dbReference type="NCBIfam" id="NF002270">
    <property type="entry name" value="PRK01202.1"/>
    <property type="match status" value="1"/>
</dbReference>
<dbReference type="PANTHER" id="PTHR11715">
    <property type="entry name" value="GLYCINE CLEAVAGE SYSTEM H PROTEIN"/>
    <property type="match status" value="1"/>
</dbReference>
<dbReference type="PANTHER" id="PTHR11715:SF3">
    <property type="entry name" value="GLYCINE CLEAVAGE SYSTEM H PROTEIN-RELATED"/>
    <property type="match status" value="1"/>
</dbReference>
<dbReference type="Pfam" id="PF01597">
    <property type="entry name" value="GCV_H"/>
    <property type="match status" value="1"/>
</dbReference>
<dbReference type="SUPFAM" id="SSF51230">
    <property type="entry name" value="Single hybrid motif"/>
    <property type="match status" value="1"/>
</dbReference>
<dbReference type="PROSITE" id="PS50968">
    <property type="entry name" value="BIOTINYL_LIPOYL"/>
    <property type="match status" value="1"/>
</dbReference>
<dbReference type="PROSITE" id="PS00189">
    <property type="entry name" value="LIPOYL"/>
    <property type="match status" value="1"/>
</dbReference>
<comment type="function">
    <text evidence="1">The glycine cleavage system catalyzes the degradation of glycine. The H protein shuttles the methylamine group of glycine from the P protein to the T protein.</text>
</comment>
<comment type="cofactor">
    <cofactor evidence="1">
        <name>(R)-lipoate</name>
        <dbReference type="ChEBI" id="CHEBI:83088"/>
    </cofactor>
    <text evidence="1">Binds 1 lipoyl cofactor covalently.</text>
</comment>
<comment type="subunit">
    <text evidence="1">The glycine cleavage system is composed of four proteins: P, T, L and H.</text>
</comment>
<comment type="similarity">
    <text evidence="1">Belongs to the GcvH family.</text>
</comment>
<sequence>MSNIPADLKYVASHEWVRDEGDGVVTVGVTFHAQELLGDIVYIELPAVGQVLAEGDGAGVVESVKAASDVYAPIAGEVLEVNADLESAPETVNADPYGAGWFFKLKLVNPADMASLLDAAAYEKEVG</sequence>
<evidence type="ECO:0000255" key="1">
    <source>
        <dbReference type="HAMAP-Rule" id="MF_00272"/>
    </source>
</evidence>
<evidence type="ECO:0000255" key="2">
    <source>
        <dbReference type="PROSITE-ProRule" id="PRU01066"/>
    </source>
</evidence>